<keyword id="KW-0997">Cell inner membrane</keyword>
<keyword id="KW-1003">Cell membrane</keyword>
<keyword id="KW-0444">Lipid biosynthesis</keyword>
<keyword id="KW-0443">Lipid metabolism</keyword>
<keyword id="KW-0472">Membrane</keyword>
<keyword id="KW-0594">Phospholipid biosynthesis</keyword>
<keyword id="KW-1208">Phospholipid metabolism</keyword>
<keyword id="KW-0808">Transferase</keyword>
<keyword id="KW-0812">Transmembrane</keyword>
<keyword id="KW-1133">Transmembrane helix</keyword>
<reference key="1">
    <citation type="journal article" date="2009" name="PLoS Pathog.">
        <title>Molecular evolutionary consequences of niche restriction in Francisella tularensis, a facultative intracellular pathogen.</title>
        <authorList>
            <person name="Larsson P."/>
            <person name="Elfsmark D."/>
            <person name="Svensson K."/>
            <person name="Wikstroem P."/>
            <person name="Forsman M."/>
            <person name="Brettin T."/>
            <person name="Keim P."/>
            <person name="Johansson A."/>
        </authorList>
    </citation>
    <scope>NUCLEOTIDE SEQUENCE [LARGE SCALE GENOMIC DNA]</scope>
    <source>
        <strain>FSC147</strain>
    </source>
</reference>
<comment type="function">
    <text evidence="1">Catalyzes the transfer of an acyl group from acyl-phosphate (acyl-PO(4)) to glycerol-3-phosphate (G3P) to form lysophosphatidic acid (LPA). This enzyme utilizes acyl-phosphate as fatty acyl donor, but not acyl-CoA or acyl-ACP.</text>
</comment>
<comment type="catalytic activity">
    <reaction evidence="1">
        <text>an acyl phosphate + sn-glycerol 3-phosphate = a 1-acyl-sn-glycero-3-phosphate + phosphate</text>
        <dbReference type="Rhea" id="RHEA:34075"/>
        <dbReference type="ChEBI" id="CHEBI:43474"/>
        <dbReference type="ChEBI" id="CHEBI:57597"/>
        <dbReference type="ChEBI" id="CHEBI:57970"/>
        <dbReference type="ChEBI" id="CHEBI:59918"/>
        <dbReference type="EC" id="2.3.1.275"/>
    </reaction>
</comment>
<comment type="pathway">
    <text evidence="1">Lipid metabolism; phospholipid metabolism.</text>
</comment>
<comment type="subunit">
    <text evidence="1">Probably interacts with PlsX.</text>
</comment>
<comment type="subcellular location">
    <subcellularLocation>
        <location evidence="1">Cell inner membrane</location>
        <topology evidence="1">Multi-pass membrane protein</topology>
    </subcellularLocation>
</comment>
<comment type="similarity">
    <text evidence="1">Belongs to the PlsY family.</text>
</comment>
<evidence type="ECO:0000255" key="1">
    <source>
        <dbReference type="HAMAP-Rule" id="MF_01043"/>
    </source>
</evidence>
<gene>
    <name evidence="1" type="primary">plsY</name>
    <name type="ordered locus">FTM_1291</name>
</gene>
<dbReference type="EC" id="2.3.1.275" evidence="1"/>
<dbReference type="EMBL" id="CP000915">
    <property type="protein sequence ID" value="ACD31144.1"/>
    <property type="molecule type" value="Genomic_DNA"/>
</dbReference>
<dbReference type="SMR" id="B2SDD0"/>
<dbReference type="KEGG" id="ftm:FTM_1291"/>
<dbReference type="HOGENOM" id="CLU_081254_0_2_6"/>
<dbReference type="UniPathway" id="UPA00085"/>
<dbReference type="GO" id="GO:0005886">
    <property type="term" value="C:plasma membrane"/>
    <property type="evidence" value="ECO:0007669"/>
    <property type="project" value="UniProtKB-SubCell"/>
</dbReference>
<dbReference type="GO" id="GO:0043772">
    <property type="term" value="F:acyl-phosphate glycerol-3-phosphate acyltransferase activity"/>
    <property type="evidence" value="ECO:0007669"/>
    <property type="project" value="UniProtKB-UniRule"/>
</dbReference>
<dbReference type="GO" id="GO:0008654">
    <property type="term" value="P:phospholipid biosynthetic process"/>
    <property type="evidence" value="ECO:0007669"/>
    <property type="project" value="UniProtKB-UniRule"/>
</dbReference>
<dbReference type="HAMAP" id="MF_01043">
    <property type="entry name" value="PlsY"/>
    <property type="match status" value="1"/>
</dbReference>
<dbReference type="InterPro" id="IPR003811">
    <property type="entry name" value="G3P_acylTferase_PlsY"/>
</dbReference>
<dbReference type="NCBIfam" id="TIGR00023">
    <property type="entry name" value="glycerol-3-phosphate 1-O-acyltransferase PlsY"/>
    <property type="match status" value="1"/>
</dbReference>
<dbReference type="PANTHER" id="PTHR30309:SF0">
    <property type="entry name" value="GLYCEROL-3-PHOSPHATE ACYLTRANSFERASE-RELATED"/>
    <property type="match status" value="1"/>
</dbReference>
<dbReference type="PANTHER" id="PTHR30309">
    <property type="entry name" value="INNER MEMBRANE PROTEIN YGIH"/>
    <property type="match status" value="1"/>
</dbReference>
<dbReference type="Pfam" id="PF02660">
    <property type="entry name" value="G3P_acyltransf"/>
    <property type="match status" value="1"/>
</dbReference>
<dbReference type="SMART" id="SM01207">
    <property type="entry name" value="G3P_acyltransf"/>
    <property type="match status" value="1"/>
</dbReference>
<protein>
    <recommendedName>
        <fullName evidence="1">Glycerol-3-phosphate acyltransferase</fullName>
    </recommendedName>
    <alternativeName>
        <fullName evidence="1">Acyl-PO4 G3P acyltransferase</fullName>
    </alternativeName>
    <alternativeName>
        <fullName evidence="1">Acyl-phosphate--glycerol-3-phosphate acyltransferase</fullName>
    </alternativeName>
    <alternativeName>
        <fullName evidence="1">G3P acyltransferase</fullName>
        <shortName evidence="1">GPAT</shortName>
        <ecNumber evidence="1">2.3.1.275</ecNumber>
    </alternativeName>
    <alternativeName>
        <fullName evidence="1">Lysophosphatidic acid synthase</fullName>
        <shortName evidence="1">LPA synthase</shortName>
    </alternativeName>
</protein>
<proteinExistence type="inferred from homology"/>
<feature type="chain" id="PRO_1000136092" description="Glycerol-3-phosphate acyltransferase">
    <location>
        <begin position="1"/>
        <end position="204"/>
    </location>
</feature>
<feature type="transmembrane region" description="Helical" evidence="1">
    <location>
        <begin position="8"/>
        <end position="28"/>
    </location>
</feature>
<feature type="transmembrane region" description="Helical" evidence="1">
    <location>
        <begin position="53"/>
        <end position="73"/>
    </location>
</feature>
<feature type="transmembrane region" description="Helical" evidence="1">
    <location>
        <begin position="81"/>
        <end position="101"/>
    </location>
</feature>
<feature type="transmembrane region" description="Helical" evidence="1">
    <location>
        <begin position="116"/>
        <end position="136"/>
    </location>
</feature>
<feature type="transmembrane region" description="Helical" evidence="1">
    <location>
        <begin position="155"/>
        <end position="175"/>
    </location>
</feature>
<accession>B2SDD0</accession>
<sequence length="204" mass="21828">MNFLNFSILIFAYLLGSINSAIIVCYIFRLPSPRSVGSGNPGTTNVLRIGGKVPAAITLIFDILKGLVPVVIAKVLTGNEFITACTALYAILGHIFPIFFGFKGGKGIATLVGTLFGFSWILGLIFVITWLCVAIITRYSSLSALVATFIASFSVIFTSDLQVAAPFLIIAIIILVKHKGNIQRLISGQESKIGDKAKAKNDSN</sequence>
<organism>
    <name type="scientific">Francisella tularensis subsp. mediasiatica (strain FSC147)</name>
    <dbReference type="NCBI Taxonomy" id="441952"/>
    <lineage>
        <taxon>Bacteria</taxon>
        <taxon>Pseudomonadati</taxon>
        <taxon>Pseudomonadota</taxon>
        <taxon>Gammaproteobacteria</taxon>
        <taxon>Thiotrichales</taxon>
        <taxon>Francisellaceae</taxon>
        <taxon>Francisella</taxon>
    </lineage>
</organism>
<name>PLSY_FRATM</name>